<reference key="1">
    <citation type="journal article" date="2005" name="Genetics">
        <title>Gene clusters for insecticidal loline alkaloids in the grass-endophytic fungus Neotyphodium uncinatum.</title>
        <authorList>
            <person name="Spiering M.J."/>
            <person name="Moon C.D."/>
            <person name="Wilkinson H.H."/>
            <person name="Schardl C.L."/>
        </authorList>
    </citation>
    <scope>NUCLEOTIDE SEQUENCE [GENOMIC DNA]</scope>
    <scope>INDUCTION</scope>
    <scope>FUNCTION</scope>
    <source>
        <strain>CBS 102646</strain>
    </source>
</reference>
<reference key="2">
    <citation type="journal article" date="2005" name="ChemBioChem">
        <title>Biosynthetic precursors of fungal pyrrolizidines, the loline alkaloids.</title>
        <authorList>
            <person name="Blankenship J.D."/>
            <person name="Houseknecht J.B."/>
            <person name="Pal S."/>
            <person name="Bush L.P."/>
            <person name="Grossman R.B."/>
            <person name="Schardl C.L."/>
        </authorList>
    </citation>
    <scope>FUNCTION</scope>
</reference>
<reference key="3">
    <citation type="journal article" date="2006" name="ChemBioChem">
        <title>On the sequence of bond formation in loline alkaloid biosynthesis.</title>
        <authorList>
            <person name="Faulkner J.R."/>
            <person name="Hussaini S.R."/>
            <person name="Blankenship J.D."/>
            <person name="Pal S."/>
            <person name="Branan B.M."/>
            <person name="Grossman R.B."/>
            <person name="Schardl C.L."/>
        </authorList>
    </citation>
    <scope>FUNCTION</scope>
</reference>
<reference key="4">
    <citation type="journal article" date="2008" name="Fungal Genet. Biol.">
        <title>Role of the LolP cytochrome P450 monooxygenase in loline alkaloid biosynthesis.</title>
        <authorList>
            <person name="Spiering M.J."/>
            <person name="Faulkner J.R."/>
            <person name="Zhang D.X."/>
            <person name="Machado C."/>
            <person name="Grossman R.B."/>
            <person name="Schardl C.L."/>
        </authorList>
    </citation>
    <scope>FUNCTION</scope>
    <source>
        <strain>CBS 102646</strain>
    </source>
</reference>
<reference key="5">
    <citation type="journal article" date="2014" name="Phytochemistry">
        <title>Ether bridge formation in loline alkaloid biosynthesis.</title>
        <authorList>
            <person name="Pan J."/>
            <person name="Bhardwaj M."/>
            <person name="Faulkner J.R."/>
            <person name="Nagabhyru P."/>
            <person name="Charlton N.D."/>
            <person name="Higashi R.M."/>
            <person name="Miller A.F."/>
            <person name="Young C.A."/>
            <person name="Grossman R.B."/>
            <person name="Schardl C.L."/>
        </authorList>
    </citation>
    <scope>FUNCTION</scope>
    <scope>DISRUPTION PHENOTYPE</scope>
</reference>
<reference key="6">
    <citation type="journal article" date="2014" name="PLoS ONE">
        <title>Enzymes from fungal and plant origin required for chemical diversification of insecticidal loline alkaloids in grass-Epichloe symbiota.</title>
        <authorList>
            <person name="Pan J."/>
            <person name="Bhardwaj M."/>
            <person name="Nagabhyru P."/>
            <person name="Grossman R.B."/>
            <person name="Schardl C.L."/>
        </authorList>
    </citation>
    <scope>FUNCTION</scope>
    <scope>BIOTECHNOLOGY</scope>
</reference>
<reference key="7">
    <citation type="journal article" date="2018" name="Biochemistry">
        <title>Installation of the ether bridge of lolines by the iron- and 2-oxoglutarate-dependent oxygenase, lolO: regio- and stereochemistry of sequential hydroxylation and oxacyclization reactions.</title>
        <authorList>
            <person name="Pan J."/>
            <person name="Bhardwaj M."/>
            <person name="Zhang B."/>
            <person name="Chang W.C."/>
            <person name="Schardl C.L."/>
            <person name="Krebs C."/>
            <person name="Grossman R.B."/>
            <person name="Bollinger J.M. Jr."/>
        </authorList>
    </citation>
    <scope>FUNCTION</scope>
    <scope>CATALYTIC ACTIVITY</scope>
</reference>
<name>LOLO2_EPIUN</name>
<dbReference type="EC" id="1.14.-.-" evidence="8"/>
<dbReference type="EMBL" id="AY723750">
    <property type="protein sequence ID" value="AAV68697.1"/>
    <property type="molecule type" value="Genomic_DNA"/>
</dbReference>
<dbReference type="SMR" id="Q5MNH6"/>
<dbReference type="GO" id="GO:0051213">
    <property type="term" value="F:dioxygenase activity"/>
    <property type="evidence" value="ECO:0007669"/>
    <property type="project" value="UniProtKB-KW"/>
</dbReference>
<dbReference type="GO" id="GO:0046872">
    <property type="term" value="F:metal ion binding"/>
    <property type="evidence" value="ECO:0007669"/>
    <property type="project" value="UniProtKB-KW"/>
</dbReference>
<dbReference type="GO" id="GO:0009820">
    <property type="term" value="P:alkaloid metabolic process"/>
    <property type="evidence" value="ECO:0007669"/>
    <property type="project" value="UniProtKB-KW"/>
</dbReference>
<dbReference type="GO" id="GO:0044283">
    <property type="term" value="P:small molecule biosynthetic process"/>
    <property type="evidence" value="ECO:0007669"/>
    <property type="project" value="UniProtKB-ARBA"/>
</dbReference>
<dbReference type="Gene3D" id="2.60.120.330">
    <property type="entry name" value="B-lactam Antibiotic, Isopenicillin N Synthase, Chain"/>
    <property type="match status" value="1"/>
</dbReference>
<dbReference type="InterPro" id="IPR026992">
    <property type="entry name" value="DIOX_N"/>
</dbReference>
<dbReference type="InterPro" id="IPR044861">
    <property type="entry name" value="IPNS-like_FE2OG_OXY"/>
</dbReference>
<dbReference type="InterPro" id="IPR027443">
    <property type="entry name" value="IPNS-like_sf"/>
</dbReference>
<dbReference type="InterPro" id="IPR050231">
    <property type="entry name" value="Iron_ascorbate_oxido_reductase"/>
</dbReference>
<dbReference type="InterPro" id="IPR005123">
    <property type="entry name" value="Oxoglu/Fe-dep_dioxygenase_dom"/>
</dbReference>
<dbReference type="PANTHER" id="PTHR47990">
    <property type="entry name" value="2-OXOGLUTARATE (2OG) AND FE(II)-DEPENDENT OXYGENASE SUPERFAMILY PROTEIN-RELATED"/>
    <property type="match status" value="1"/>
</dbReference>
<dbReference type="Pfam" id="PF03171">
    <property type="entry name" value="2OG-FeII_Oxy"/>
    <property type="match status" value="1"/>
</dbReference>
<dbReference type="Pfam" id="PF14226">
    <property type="entry name" value="DIOX_N"/>
    <property type="match status" value="1"/>
</dbReference>
<dbReference type="SUPFAM" id="SSF51197">
    <property type="entry name" value="Clavaminate synthase-like"/>
    <property type="match status" value="1"/>
</dbReference>
<dbReference type="PROSITE" id="PS51471">
    <property type="entry name" value="FE2OG_OXY"/>
    <property type="match status" value="1"/>
</dbReference>
<proteinExistence type="evidence at protein level"/>
<gene>
    <name evidence="9" type="primary">lolO2</name>
    <name evidence="9" type="synonym">lolO</name>
</gene>
<organism>
    <name type="scientific">Epichloe uncinata</name>
    <name type="common">Endophyte fungus</name>
    <name type="synonym">Neotyphodium uncinatum</name>
    <dbReference type="NCBI Taxonomy" id="5050"/>
    <lineage>
        <taxon>Eukaryota</taxon>
        <taxon>Fungi</taxon>
        <taxon>Dikarya</taxon>
        <taxon>Ascomycota</taxon>
        <taxon>Pezizomycotina</taxon>
        <taxon>Sordariomycetes</taxon>
        <taxon>Hypocreomycetidae</taxon>
        <taxon>Hypocreales</taxon>
        <taxon>Clavicipitaceae</taxon>
        <taxon>Epichloe</taxon>
    </lineage>
</organism>
<keyword id="KW-0017">Alkaloid metabolism</keyword>
<keyword id="KW-0223">Dioxygenase</keyword>
<keyword id="KW-0408">Iron</keyword>
<keyword id="KW-0479">Metal-binding</keyword>
<keyword id="KW-0560">Oxidoreductase</keyword>
<protein>
    <recommendedName>
        <fullName evidence="9">2-oxoglutarate-dependent dioxygenase lolO2</fullName>
        <ecNumber evidence="8">1.14.-.-</ecNumber>
    </recommendedName>
    <alternativeName>
        <fullName evidence="9">Loline biosynthesis cluster 2 protein O</fullName>
    </alternativeName>
</protein>
<comment type="function">
    <text evidence="2 3 4 5 6 7 8">2-oxoglutarate-dependent dioxygenase; part of the gene cluster that mediates the biosynthesis of loline alkaloids, potent insecticidal agents composed of a pyrrolizidine ring system and an uncommon ether bridge linking carbons 2 and 7 (PubMed:15654104). Lolines are structurally differentiated by the various modifications of the L-amino group and include norloline, loline, N-methylloline, N-acetylloline, N-acetylnorloline, and N-formylloline (PubMed:15861432, PubMed:25531527). The first committed step is the condensation of O-acetyl-L-homoserine (derived from L-aspartic acid) and L-proline, probably catalyzed by the gamma-type pyridoxal 5'-phosphate(PLP)-dependent enzyme lolC, to give the diamino diacid, NACPP (PubMed:15861432, PubMed:16755627). Ensuing cyclization, decarboxylation, and acetylation steps yield 1-exo-acetamidopyrrolizidine (AcAP) (PubMed:24374065). LolO is required for installation of the ether bridge upon the pathway intermediate, 1-exo-acetamidopyrrolizidine (AcAP) (PubMed:29537853). In sequential 2-oxoglutarate- and O(2)-consuming steps, lolO removes hydrogens from C2 and C7 of AcAP to form both carbon-oxygen bonds in N-acetylnorloline (NANL), the precursor to all other lolines (PubMed:24374065, PubMed:29537853). The enzymes lolD, lolE, lolF and lolT have also been proposed to be involved in the ether-bridge installation (PubMed:15654104). Further processing of the exocyclic moiety of NANL by fungal N-acetamidase (LolN), methyltransferase (LolM), and cytochrome P450 (LolP) enzymes, with occasional involvement of a plant acetyltransferase, generates the other known lolines (PubMed:18655839, PubMed:25531527). LolN transforms NANL to norlonine which is monomethylated and dimethylated to respectively lonine and N-methyllonine (NML) by lolM (PubMed:25531527). LolP catalyzes hydroxylation of the methyl group in N-methylloline (NML) and further oxygenation to N-formylloline (NFL) (PubMed:18655839). A plant acetyltransferase is responsible for the acetylation of loline to form N-acetylloline (NAL) (PubMed:25531527). LolA might interact with aspartate kinase to prevent feedback inhibition of its activity by these end products and thereby promote production of L-homoserine from L-aspartate (PubMed:15654104).</text>
</comment>
<comment type="cofactor">
    <cofactor evidence="1">
        <name>Fe(2+)</name>
        <dbReference type="ChEBI" id="CHEBI:29033"/>
    </cofactor>
    <text evidence="1">Binds 1 Fe(2+) ion per subunit.</text>
</comment>
<comment type="pathway">
    <text evidence="11">Alkaloid biosynthesis.</text>
</comment>
<comment type="disruption phenotype">
    <text evidence="6">Leads to the accumulation of exo-1-acetamidopyrrolizidine but no lolines (PubMed:24374065).</text>
</comment>
<comment type="biotechnology">
    <text evidence="12">Loline alkaloids show broad-spectrum anti-insect activity, and different lolines may have different biological activities (PubMed:25531527). In vitro tests of NFL, NAL, NML, and semisynthetic loline derivatives with long carbon-chain acylations on the 1-amine have shown that many are effective against both fall armyworm larvae and European corn borer larvae, but the effects seem to differ depending on the modifications (PubMed:25531527). N-Formylloline reduces the weight gain of fall armyworms by deterring feeding, and does not significantly affect corn borers (PubMed:25531527). In contrast, NAL reduces the weight gain of corn borer larvae without changing larval feeding behavior, indicating that its effect is due to metabolic toxicity. N-formylloline, NAL, and NML are almost as potent as nicotine in insecticidal activity against green bugs (PubMed:25531527).</text>
</comment>
<comment type="similarity">
    <text evidence="10">Belongs to the iron/ascorbate-dependent oxidoreductase family.</text>
</comment>
<feature type="chain" id="PRO_0000444362" description="2-oxoglutarate-dependent dioxygenase lolO2">
    <location>
        <begin position="1"/>
        <end position="362"/>
    </location>
</feature>
<feature type="domain" description="Fe2OG dioxygenase" evidence="1">
    <location>
        <begin position="199"/>
        <end position="312"/>
    </location>
</feature>
<feature type="binding site" evidence="1">
    <location>
        <position position="222"/>
    </location>
    <ligand>
        <name>Fe cation</name>
        <dbReference type="ChEBI" id="CHEBI:24875"/>
    </ligand>
</feature>
<feature type="binding site" evidence="1">
    <location>
        <position position="224"/>
    </location>
    <ligand>
        <name>Fe cation</name>
        <dbReference type="ChEBI" id="CHEBI:24875"/>
    </ligand>
</feature>
<feature type="binding site" evidence="1">
    <location>
        <position position="280"/>
    </location>
    <ligand>
        <name>Fe cation</name>
        <dbReference type="ChEBI" id="CHEBI:24875"/>
    </ligand>
</feature>
<feature type="binding site" evidence="1">
    <location>
        <position position="303"/>
    </location>
    <ligand>
        <name>2-oxoglutarate</name>
        <dbReference type="ChEBI" id="CHEBI:16810"/>
    </ligand>
</feature>
<evidence type="ECO:0000255" key="1">
    <source>
        <dbReference type="PROSITE-ProRule" id="PRU00805"/>
    </source>
</evidence>
<evidence type="ECO:0000269" key="2">
    <source>
    </source>
</evidence>
<evidence type="ECO:0000269" key="3">
    <source>
    </source>
</evidence>
<evidence type="ECO:0000269" key="4">
    <source>
    </source>
</evidence>
<evidence type="ECO:0000269" key="5">
    <source>
    </source>
</evidence>
<evidence type="ECO:0000269" key="6">
    <source>
    </source>
</evidence>
<evidence type="ECO:0000269" key="7">
    <source>
    </source>
</evidence>
<evidence type="ECO:0000269" key="8">
    <source>
    </source>
</evidence>
<evidence type="ECO:0000303" key="9">
    <source>
    </source>
</evidence>
<evidence type="ECO:0000305" key="10"/>
<evidence type="ECO:0000305" key="11">
    <source>
    </source>
</evidence>
<evidence type="ECO:0000305" key="12">
    <source>
    </source>
</evidence>
<accession>Q5MNH6</accession>
<sequence>MTVTNKPVEPANVPVMDFEAIHASVGNERKEYLRQLDEAWSHHGAVYVINHSIGTETLEEAFVWCKKFFDLPLAVKNSVHIPPDVSKHFQGWTGTGEAISSQGVWDPDEIERLRKEMPTELKEAMELQDPCGTYPPGNPDLNLVEQHLPGYLDFLKKWFAACYKQSLQNMRLVCEILGMEDLDYIGKKFEPRHMSTHSTWNYFLGQPVSQLASGSSNRLNAHTDYCQFTMLFQDMVGGLELHDYEEDIYRPVPPIKGAMIVQVGDLLEKQTNGRWRSALHRVTAPSRYMYGGSPGGDDELVQRYSLVFFGHLNLDEMIKPLPGCEKPGKWSTLEWKDLMTAGQWLARRVALEYERKTAATVM</sequence>